<protein>
    <recommendedName>
        <fullName evidence="1">Large ribosomal subunit protein bL27</fullName>
    </recommendedName>
    <alternativeName>
        <fullName evidence="3">50S ribosomal protein L27</fullName>
    </alternativeName>
</protein>
<sequence length="86" mass="9017">MAQKKGGGSTRNGRDSESKRLGVKVYGGQAINAGGIIVRQRGTRTHAGVNVGMGKDHTLFALVDGHVKFANRGEGKKQFVDVVPAA</sequence>
<reference key="1">
    <citation type="submission" date="2008-05" db="EMBL/GenBank/DDBJ databases">
        <title>Complete sequence of chromosome 1 of Ralstonia pickettii 12J.</title>
        <authorList>
            <person name="Lucas S."/>
            <person name="Copeland A."/>
            <person name="Lapidus A."/>
            <person name="Glavina del Rio T."/>
            <person name="Dalin E."/>
            <person name="Tice H."/>
            <person name="Bruce D."/>
            <person name="Goodwin L."/>
            <person name="Pitluck S."/>
            <person name="Meincke L."/>
            <person name="Brettin T."/>
            <person name="Detter J.C."/>
            <person name="Han C."/>
            <person name="Kuske C.R."/>
            <person name="Schmutz J."/>
            <person name="Larimer F."/>
            <person name="Land M."/>
            <person name="Hauser L."/>
            <person name="Kyrpides N."/>
            <person name="Mikhailova N."/>
            <person name="Marsh T."/>
            <person name="Richardson P."/>
        </authorList>
    </citation>
    <scope>NUCLEOTIDE SEQUENCE [LARGE SCALE GENOMIC DNA]</scope>
    <source>
        <strain>12J</strain>
    </source>
</reference>
<name>RL27_RALPJ</name>
<comment type="similarity">
    <text evidence="1">Belongs to the bacterial ribosomal protein bL27 family.</text>
</comment>
<organism>
    <name type="scientific">Ralstonia pickettii (strain 12J)</name>
    <dbReference type="NCBI Taxonomy" id="402626"/>
    <lineage>
        <taxon>Bacteria</taxon>
        <taxon>Pseudomonadati</taxon>
        <taxon>Pseudomonadota</taxon>
        <taxon>Betaproteobacteria</taxon>
        <taxon>Burkholderiales</taxon>
        <taxon>Burkholderiaceae</taxon>
        <taxon>Ralstonia</taxon>
    </lineage>
</organism>
<proteinExistence type="inferred from homology"/>
<feature type="chain" id="PRO_1000128795" description="Large ribosomal subunit protein bL27">
    <location>
        <begin position="1"/>
        <end position="86"/>
    </location>
</feature>
<feature type="region of interest" description="Disordered" evidence="2">
    <location>
        <begin position="1"/>
        <end position="21"/>
    </location>
</feature>
<feature type="compositionally biased region" description="Gly residues" evidence="2">
    <location>
        <begin position="1"/>
        <end position="10"/>
    </location>
</feature>
<keyword id="KW-0687">Ribonucleoprotein</keyword>
<keyword id="KW-0689">Ribosomal protein</keyword>
<accession>B2UCV4</accession>
<dbReference type="EMBL" id="CP001068">
    <property type="protein sequence ID" value="ACD28189.1"/>
    <property type="molecule type" value="Genomic_DNA"/>
</dbReference>
<dbReference type="SMR" id="B2UCV4"/>
<dbReference type="STRING" id="402626.Rpic_3066"/>
<dbReference type="KEGG" id="rpi:Rpic_3066"/>
<dbReference type="eggNOG" id="COG0211">
    <property type="taxonomic scope" value="Bacteria"/>
</dbReference>
<dbReference type="HOGENOM" id="CLU_095424_4_1_4"/>
<dbReference type="GO" id="GO:0022625">
    <property type="term" value="C:cytosolic large ribosomal subunit"/>
    <property type="evidence" value="ECO:0007669"/>
    <property type="project" value="TreeGrafter"/>
</dbReference>
<dbReference type="GO" id="GO:0003735">
    <property type="term" value="F:structural constituent of ribosome"/>
    <property type="evidence" value="ECO:0007669"/>
    <property type="project" value="InterPro"/>
</dbReference>
<dbReference type="GO" id="GO:0006412">
    <property type="term" value="P:translation"/>
    <property type="evidence" value="ECO:0007669"/>
    <property type="project" value="UniProtKB-UniRule"/>
</dbReference>
<dbReference type="FunFam" id="2.40.50.100:FF:000020">
    <property type="entry name" value="50S ribosomal protein L27"/>
    <property type="match status" value="1"/>
</dbReference>
<dbReference type="Gene3D" id="2.40.50.100">
    <property type="match status" value="1"/>
</dbReference>
<dbReference type="HAMAP" id="MF_00539">
    <property type="entry name" value="Ribosomal_bL27"/>
    <property type="match status" value="1"/>
</dbReference>
<dbReference type="InterPro" id="IPR001684">
    <property type="entry name" value="Ribosomal_bL27"/>
</dbReference>
<dbReference type="InterPro" id="IPR018261">
    <property type="entry name" value="Ribosomal_bL27_CS"/>
</dbReference>
<dbReference type="NCBIfam" id="TIGR00062">
    <property type="entry name" value="L27"/>
    <property type="match status" value="1"/>
</dbReference>
<dbReference type="PANTHER" id="PTHR15893:SF0">
    <property type="entry name" value="LARGE RIBOSOMAL SUBUNIT PROTEIN BL27M"/>
    <property type="match status" value="1"/>
</dbReference>
<dbReference type="PANTHER" id="PTHR15893">
    <property type="entry name" value="RIBOSOMAL PROTEIN L27"/>
    <property type="match status" value="1"/>
</dbReference>
<dbReference type="Pfam" id="PF01016">
    <property type="entry name" value="Ribosomal_L27"/>
    <property type="match status" value="1"/>
</dbReference>
<dbReference type="PRINTS" id="PR00063">
    <property type="entry name" value="RIBOSOMALL27"/>
</dbReference>
<dbReference type="SUPFAM" id="SSF110324">
    <property type="entry name" value="Ribosomal L27 protein-like"/>
    <property type="match status" value="1"/>
</dbReference>
<dbReference type="PROSITE" id="PS00831">
    <property type="entry name" value="RIBOSOMAL_L27"/>
    <property type="match status" value="1"/>
</dbReference>
<evidence type="ECO:0000255" key="1">
    <source>
        <dbReference type="HAMAP-Rule" id="MF_00539"/>
    </source>
</evidence>
<evidence type="ECO:0000256" key="2">
    <source>
        <dbReference type="SAM" id="MobiDB-lite"/>
    </source>
</evidence>
<evidence type="ECO:0000305" key="3"/>
<gene>
    <name evidence="1" type="primary">rpmA</name>
    <name type="ordered locus">Rpic_3066</name>
</gene>